<gene>
    <name type="primary">APP</name>
</gene>
<dbReference type="EMBL" id="X56124">
    <property type="protein sequence ID" value="CAA39589.1"/>
    <property type="molecule type" value="mRNA"/>
</dbReference>
<dbReference type="EMBL" id="X56126">
    <property type="protein sequence ID" value="CAA39591.1"/>
    <property type="molecule type" value="mRNA"/>
</dbReference>
<dbReference type="BMRB" id="Q28053"/>
<dbReference type="STRING" id="9913.ENSBTAP00000060984"/>
<dbReference type="PaxDb" id="9913-ENSBTAP00000045951"/>
<dbReference type="eggNOG" id="KOG3540">
    <property type="taxonomic scope" value="Eukaryota"/>
</dbReference>
<dbReference type="HOGENOM" id="CLU_014607_2_1_1"/>
<dbReference type="InParanoid" id="Q28053"/>
<dbReference type="OrthoDB" id="6147836at2759"/>
<dbReference type="Proteomes" id="UP000009136">
    <property type="component" value="Unplaced"/>
</dbReference>
<dbReference type="GO" id="GO:0009986">
    <property type="term" value="C:cell surface"/>
    <property type="evidence" value="ECO:0007669"/>
    <property type="project" value="UniProtKB-SubCell"/>
</dbReference>
<dbReference type="GO" id="GO:0005905">
    <property type="term" value="C:clathrin-coated pit"/>
    <property type="evidence" value="ECO:0007669"/>
    <property type="project" value="UniProtKB-SubCell"/>
</dbReference>
<dbReference type="GO" id="GO:0005769">
    <property type="term" value="C:early endosome"/>
    <property type="evidence" value="ECO:0000250"/>
    <property type="project" value="UniProtKB"/>
</dbReference>
<dbReference type="GO" id="GO:0005576">
    <property type="term" value="C:extracellular region"/>
    <property type="evidence" value="ECO:0007669"/>
    <property type="project" value="UniProtKB-SubCell"/>
</dbReference>
<dbReference type="GO" id="GO:0005798">
    <property type="term" value="C:Golgi-associated vesicle"/>
    <property type="evidence" value="ECO:0000250"/>
    <property type="project" value="UniProtKB"/>
</dbReference>
<dbReference type="GO" id="GO:0030426">
    <property type="term" value="C:growth cone"/>
    <property type="evidence" value="ECO:0007669"/>
    <property type="project" value="UniProtKB-SubCell"/>
</dbReference>
<dbReference type="GO" id="GO:0005634">
    <property type="term" value="C:nucleus"/>
    <property type="evidence" value="ECO:0007669"/>
    <property type="project" value="UniProtKB-SubCell"/>
</dbReference>
<dbReference type="GO" id="GO:0043204">
    <property type="term" value="C:perikaryon"/>
    <property type="evidence" value="ECO:0007669"/>
    <property type="project" value="UniProtKB-SubCell"/>
</dbReference>
<dbReference type="GO" id="GO:0005886">
    <property type="term" value="C:plasma membrane"/>
    <property type="evidence" value="ECO:0007669"/>
    <property type="project" value="UniProtKB-SubCell"/>
</dbReference>
<dbReference type="GO" id="GO:0055037">
    <property type="term" value="C:recycling endosome"/>
    <property type="evidence" value="ECO:0000250"/>
    <property type="project" value="UniProtKB"/>
</dbReference>
<dbReference type="GO" id="GO:0050890">
    <property type="term" value="P:cognition"/>
    <property type="evidence" value="ECO:0000250"/>
    <property type="project" value="UniProtKB"/>
</dbReference>
<dbReference type="CDD" id="cd21707">
    <property type="entry name" value="JMTM_APP"/>
    <property type="match status" value="1"/>
</dbReference>
<dbReference type="FunFam" id="4.10.230.10:FF:000001">
    <property type="entry name" value="Amyloid beta A4 protein"/>
    <property type="match status" value="1"/>
</dbReference>
<dbReference type="Gene3D" id="4.10.230.10">
    <property type="entry name" value="Amyloidogenic glycoprotein, amyloid-beta peptide"/>
    <property type="match status" value="1"/>
</dbReference>
<dbReference type="InterPro" id="IPR008155">
    <property type="entry name" value="Amyloid_glyco"/>
</dbReference>
<dbReference type="InterPro" id="IPR013803">
    <property type="entry name" value="Amyloid_glyco_Abeta"/>
</dbReference>
<dbReference type="InterPro" id="IPR037071">
    <property type="entry name" value="Amyloid_glyco_Abeta_sf"/>
</dbReference>
<dbReference type="PANTHER" id="PTHR23103">
    <property type="entry name" value="ALZHEIMER'S DISEASE BETA-AMYLOID RELATED"/>
    <property type="match status" value="1"/>
</dbReference>
<dbReference type="PANTHER" id="PTHR23103:SF7">
    <property type="entry name" value="AMYLOID-BETA PRECURSOR PROTEIN"/>
    <property type="match status" value="1"/>
</dbReference>
<dbReference type="Pfam" id="PF03494">
    <property type="entry name" value="Beta-APP"/>
    <property type="match status" value="1"/>
</dbReference>
<dbReference type="PRINTS" id="PR00204">
    <property type="entry name" value="BETAAMYLOID"/>
</dbReference>
<name>A4_BOVIN</name>
<feature type="chain" id="PRO_0000000064" description="Soluble APP-beta" evidence="1">
    <location>
        <begin position="1" status="less than"/>
        <end position="6"/>
    </location>
</feature>
<feature type="chain" id="PRO_0000000065" description="CTF-alpha" evidence="1">
    <location>
        <begin position="7"/>
        <end position="59" status="greater than"/>
    </location>
</feature>
<feature type="chain" id="PRO_0000000066" description="Amyloid-beta protein 42" evidence="2">
    <location>
        <begin position="7"/>
        <end position="48"/>
    </location>
</feature>
<feature type="chain" id="PRO_0000000067" description="Amyloid-beta protein 40" evidence="2">
    <location>
        <begin position="7"/>
        <end position="46"/>
    </location>
</feature>
<feature type="chain" id="PRO_0000000068" description="Gamma-secretase C-terminal fragment 59" evidence="1">
    <location>
        <begin position="47"/>
        <end position="59" status="greater than"/>
    </location>
</feature>
<feature type="chain" id="PRO_0000000069" description="Gamma-secretase C-terminal fragment 57" evidence="1">
    <location>
        <begin position="49"/>
        <end position="59" status="greater than"/>
    </location>
</feature>
<feature type="topological domain" description="Extracellular" evidence="4">
    <location>
        <begin position="1" status="less than"/>
        <end position="34"/>
    </location>
</feature>
<feature type="transmembrane region" description="Helical" evidence="4">
    <location>
        <begin position="35"/>
        <end position="58"/>
    </location>
</feature>
<feature type="topological domain" description="Cytoplasmic" evidence="4">
    <location>
        <begin position="59"/>
        <end position="59" status="greater than"/>
    </location>
</feature>
<feature type="site" description="Cleavage; by ACE" evidence="2">
    <location>
        <begin position="13"/>
        <end position="14"/>
    </location>
</feature>
<feature type="non-terminal residue">
    <location>
        <position position="1"/>
    </location>
</feature>
<feature type="non-terminal residue">
    <location>
        <position position="59"/>
    </location>
</feature>
<comment type="function">
    <text evidence="1 2">Functions as a cell surface receptor and performs physiological functions on the surface of neurons relevant to neurite growth, neuronal adhesion and axonogenesis. Interaction between APP molecules on neighboring cells promotes synaptogenesis. Involved in cell mobility and transcription regulation through protein-protein interactions (By similarity). Can promote transcription activation through binding to APBB1-KAT5 and inhibit Notch signaling through interaction with Numb (By similarity). Couples to apoptosis-inducing pathways such as those mediated by G(o) and JIP (By similarity). Inhibits G(o)-alpha ATPase activity (By similarity). Acts as a kinesin I membrane receptor, mediating the axonal transport of beta-secretase and presenilin 1 (By similarity). By acting as a kinesin I membrane receptor, plays a role in axonal anterograde transport of cargo towards synapses in axons (By similarity). May be involved in copper homeostasis/oxidative stress through copper ion reduction (By similarity). In vitro, copper-metallated APP induces neuronal death directly or is potentiated through Cu(2+)-mediated low-density lipoprotein oxidation (By similarity). Can regulate neurite outgrowth through binding to components of the extracellular matrix such as heparin and collagen I and IV. Induces a AGER-dependent pathway that involves activation of p38 MAPK, resulting in internalization of amyloid-beta peptide and mitochondrial dysfunction in cultured cortical neurons. Provides Cu(2+) ions for GPC1 which are required for release of nitric oxide (NO) and subsequent degradation of the heparan sulfate chains on GPC1 (By similarity).</text>
</comment>
<comment type="subunit">
    <text evidence="1 2 3">Binds, via its C-terminus, to the PID domain of several cytoplasmic proteins, including APBB family members, the APBA family, MAPK8IP1, SHC1 and NUMB and DAB1 (By similarity). Binding to DAB1 inhibits its serine phosphorylation (By similarity). Interacts (via NPXY motif) with DAB2 (via PID domain); the interaction is impaired by tyrosine phosphorylation of the NPXY motif. Also interacts with GPCR-like protein BPP, APPBP1, IB1, KNS2 (via its TPR domains), APPBP2 (via BaSS) and DDB1. In vitro, it binds MAPT via the MT-binding domains (By similarity). Associates with microtubules in the presence of ATP and in a kinesin-dependent manner (By similarity). Interacts, through a C-terminal domain, with GNAO1. Interacts with CPEB1, ANKS1B and AGER (By similarity). Interacts with ITM2B. Interacts with ITM2C. Interacts with IDE. Can form homodimers; dimerization is enhanced in the presence of Cu(2+) ions. Can form homodimers; this is promoted by heparin binding (By similarity). Interacts with SORL1 (via N-terminal ectodomain); this interaction retains APP in the trans-Golgi network and reduces processing into soluble APP-alpha and amyloid-beta peptides (By similarity). Interacts with PLD3 (By similarity). Interacts with VDAC1 (By similarity). Interacts with NSG1; could regulate APP processing (By similarity). Amyloid-beta protein 42 interacts with FPR2 (By similarity). Interacts with LRRK2 (By similarity). Interacts (via cytoplasmic domain) with KIF5B (By similarity). Interacts (via C-terminus) with APBB2/FE65L1 (via C-terminus) (By similarity). Interacts (via intracellular domain) with APBB3 (By similarity).</text>
</comment>
<comment type="subcellular location">
    <subcellularLocation>
        <location evidence="2">Cell membrane</location>
        <topology evidence="2">Single-pass type I membrane protein</topology>
    </subcellularLocation>
    <subcellularLocation>
        <location evidence="2">Membrane</location>
        <topology evidence="2">Single-pass type I membrane protein</topology>
    </subcellularLocation>
    <subcellularLocation>
        <location evidence="2">Perikaryon</location>
    </subcellularLocation>
    <subcellularLocation>
        <location evidence="2">Cell projection</location>
        <location evidence="2">Growth cone</location>
    </subcellularLocation>
    <subcellularLocation>
        <location evidence="2">Membrane</location>
        <location evidence="2">Clathrin-coated pit</location>
    </subcellularLocation>
    <subcellularLocation>
        <location evidence="2">Early endosome</location>
    </subcellularLocation>
    <subcellularLocation>
        <location evidence="2">Cytoplasmic vesicle</location>
    </subcellularLocation>
    <text evidence="2">Cell surface protein that rapidly becomes internalized via clathrin-coated pits. Only a minor proportion is present at the cell membrane; most of the protein is present in intracellular vesicles. During maturation, the immature APP (N-glycosylated in the endoplasmic reticulum) moves to the Golgi complex where complete maturation occurs (O-glycosylated and sulfated). After alpha-secretase cleavage, soluble APP is released into the extracellular space and the C-terminal is internalized to endosomes and lysosomes. Some APP accumulates in secretory transport vesicles leaving the late Golgi compartment and returns to the cell surface.</text>
</comment>
<comment type="subcellular location">
    <molecule>Soluble APP-beta</molecule>
    <subcellularLocation>
        <location evidence="2">Secreted</location>
    </subcellularLocation>
</comment>
<comment type="subcellular location">
    <molecule>Amyloid-beta protein 42</molecule>
    <subcellularLocation>
        <location evidence="2">Cell surface</location>
    </subcellularLocation>
    <text evidence="2">Associates with FPR2 at the cell surface and the complex is then rapidly internalized.</text>
</comment>
<comment type="subcellular location">
    <molecule>Gamma-secretase C-terminal fragment 59</molecule>
    <subcellularLocation>
        <location evidence="2">Nucleus</location>
    </subcellularLocation>
    <subcellularLocation>
        <location evidence="2">Cytoplasm</location>
    </subcellularLocation>
    <text evidence="2 3">Located to both the cytoplasm and nuclei of neurons. It can be translocated to the nucleus through association with APBB1 (Fe65). In dopaminergic neurons, the phosphorylated form is localized to the nucleus (By similarity).</text>
</comment>
<comment type="PTM">
    <text evidence="2">Proteolytically processed under normal cellular conditions. Cleavage either by alpha-secretase, beta-secretase or theta-secretase leads to generation and extracellular release of soluble APP peptides, S-APP-alpha and S-APP-beta, and the retention of corresponding membrane-anchored C-terminal fragments, C80, C83 and C99. Subsequent processing of C80 and C83 by gamma-secretase yields P3 peptides. This is the major secretory pathway and is non-amyloidogenic. Alternatively, presenilin/nicastrin-mediated gamma-secretase processing of C99 releases the amyloid-beta proteins, amyloid-beta protein 40 and amyloid-beta protein 42, major components of amyloid plaques, and the cytotoxic C-terminal fragments, gamma-CTF(50), gamma-CTF(57) and gamma-CTF(59). PSEN1 cleavage is more efficient with C83 than with C99 as substrate (in vitro). Amyloid-beta protein 40 and Amyloid-beta protein 42 are cleaved by ACE. Many other minor amyloid-beta peptides, amyloid-beta 1-X peptides, are found in cerebral spinal fluid (CSF) including the amyloid-beta X-15 peptides, produced from the cleavage by alpha-secretase.</text>
</comment>
<comment type="similarity">
    <text evidence="5">Belongs to the APP family.</text>
</comment>
<accession>Q28053</accession>
<keyword id="KW-0034">Amyloid</keyword>
<keyword id="KW-1003">Cell membrane</keyword>
<keyword id="KW-0966">Cell projection</keyword>
<keyword id="KW-0168">Coated pit</keyword>
<keyword id="KW-0963">Cytoplasm</keyword>
<keyword id="KW-0968">Cytoplasmic vesicle</keyword>
<keyword id="KW-0967">Endosome</keyword>
<keyword id="KW-0472">Membrane</keyword>
<keyword id="KW-0539">Nucleus</keyword>
<keyword id="KW-1185">Reference proteome</keyword>
<keyword id="KW-0964">Secreted</keyword>
<keyword id="KW-0812">Transmembrane</keyword>
<keyword id="KW-1133">Transmembrane helix</keyword>
<proteinExistence type="evidence at transcript level"/>
<sequence length="59" mass="6414">ISEVKMDAEFRHDSGYEVHHQKLVFFAEDVGSNKGAIIGLMVGGVVIATVIVITLVMLK</sequence>
<protein>
    <recommendedName>
        <fullName evidence="2">Amyloid-beta precursor protein</fullName>
    </recommendedName>
    <alternativeName>
        <fullName>ABPP</fullName>
        <shortName evidence="2">APP</shortName>
    </alternativeName>
    <alternativeName>
        <fullName>Alzheimer disease amyloid A4 protein homolog</fullName>
    </alternativeName>
    <alternativeName>
        <fullName evidence="5">Amyloid precursor protein</fullName>
    </alternativeName>
    <alternativeName>
        <fullName evidence="3">Amyloid-beta (A4) precursor protein</fullName>
    </alternativeName>
    <alternativeName>
        <fullName>Amyloid-beta A4 protein</fullName>
    </alternativeName>
    <component>
        <recommendedName>
            <fullName>Soluble APP-beta</fullName>
            <shortName>S-APP-beta</shortName>
        </recommendedName>
    </component>
    <component>
        <recommendedName>
            <fullName>CTF-alpha</fullName>
        </recommendedName>
    </component>
    <component>
        <recommendedName>
            <fullName>Amyloid-beta protein 42</fullName>
            <shortName>Abeta42</shortName>
        </recommendedName>
        <alternativeName>
            <fullName>Beta-APP42</fullName>
        </alternativeName>
    </component>
    <component>
        <recommendedName>
            <fullName>Amyloid-beta protein 40</fullName>
            <shortName>Abeta40</shortName>
        </recommendedName>
        <alternativeName>
            <fullName>Beta-APP40</fullName>
        </alternativeName>
    </component>
    <component>
        <recommendedName>
            <fullName>Gamma-secretase C-terminal fragment 59</fullName>
        </recommendedName>
        <alternativeName>
            <fullName>Gamma-CTF(59)</fullName>
        </alternativeName>
    </component>
    <component>
        <recommendedName>
            <fullName>Gamma-secretase C-terminal fragment 57</fullName>
        </recommendedName>
        <alternativeName>
            <fullName>Gamma-CTF(57)</fullName>
        </alternativeName>
    </component>
</protein>
<reference key="1">
    <citation type="journal article" date="1991" name="Brain Res. Mol. Brain Res.">
        <title>Conservation of the sequence of the Alzheimer's disease amyloid peptide in dog, polar bear and five other mammals by cross-species polymerase chain reaction analysis.</title>
        <authorList>
            <person name="Johnstone E.M."/>
            <person name="Chaney M.O."/>
            <person name="Norris F.H."/>
            <person name="Pascual R."/>
            <person name="Little S.P."/>
        </authorList>
    </citation>
    <scope>NUCLEOTIDE SEQUENCE [MRNA]</scope>
    <source>
        <tissue>Brain</tissue>
    </source>
</reference>
<evidence type="ECO:0000250" key="1"/>
<evidence type="ECO:0000250" key="2">
    <source>
        <dbReference type="UniProtKB" id="P05067"/>
    </source>
</evidence>
<evidence type="ECO:0000250" key="3">
    <source>
        <dbReference type="UniProtKB" id="P12023"/>
    </source>
</evidence>
<evidence type="ECO:0000255" key="4"/>
<evidence type="ECO:0000305" key="5"/>
<organism>
    <name type="scientific">Bos taurus</name>
    <name type="common">Bovine</name>
    <dbReference type="NCBI Taxonomy" id="9913"/>
    <lineage>
        <taxon>Eukaryota</taxon>
        <taxon>Metazoa</taxon>
        <taxon>Chordata</taxon>
        <taxon>Craniata</taxon>
        <taxon>Vertebrata</taxon>
        <taxon>Euteleostomi</taxon>
        <taxon>Mammalia</taxon>
        <taxon>Eutheria</taxon>
        <taxon>Laurasiatheria</taxon>
        <taxon>Artiodactyla</taxon>
        <taxon>Ruminantia</taxon>
        <taxon>Pecora</taxon>
        <taxon>Bovidae</taxon>
        <taxon>Bovinae</taxon>
        <taxon>Bos</taxon>
    </lineage>
</organism>